<protein>
    <recommendedName>
        <fullName evidence="1">Phosphopentomutase</fullName>
        <ecNumber evidence="1">5.4.2.7</ecNumber>
    </recommendedName>
    <alternativeName>
        <fullName evidence="1">Phosphodeoxyribomutase</fullName>
    </alternativeName>
</protein>
<comment type="function">
    <text evidence="1">Isomerase that catalyzes the conversion of deoxy-ribose 1-phosphate (dRib-1-P) and ribose 1-phosphate (Rib-1-P) to deoxy-ribose 5-phosphate (dRib-5-P) and ribose 5-phosphate (Rib-5-P), respectively.</text>
</comment>
<comment type="catalytic activity">
    <reaction evidence="1">
        <text>2-deoxy-alpha-D-ribose 1-phosphate = 2-deoxy-D-ribose 5-phosphate</text>
        <dbReference type="Rhea" id="RHEA:27658"/>
        <dbReference type="ChEBI" id="CHEBI:57259"/>
        <dbReference type="ChEBI" id="CHEBI:62877"/>
        <dbReference type="EC" id="5.4.2.7"/>
    </reaction>
</comment>
<comment type="catalytic activity">
    <reaction evidence="1">
        <text>alpha-D-ribose 1-phosphate = D-ribose 5-phosphate</text>
        <dbReference type="Rhea" id="RHEA:18793"/>
        <dbReference type="ChEBI" id="CHEBI:57720"/>
        <dbReference type="ChEBI" id="CHEBI:78346"/>
        <dbReference type="EC" id="5.4.2.7"/>
    </reaction>
</comment>
<comment type="cofactor">
    <cofactor evidence="1">
        <name>Mn(2+)</name>
        <dbReference type="ChEBI" id="CHEBI:29035"/>
    </cofactor>
    <text evidence="1">Binds 2 manganese ions.</text>
</comment>
<comment type="pathway">
    <text evidence="1">Carbohydrate degradation; 2-deoxy-D-ribose 1-phosphate degradation; D-glyceraldehyde 3-phosphate and acetaldehyde from 2-deoxy-alpha-D-ribose 1-phosphate: step 1/2.</text>
</comment>
<comment type="subcellular location">
    <subcellularLocation>
        <location evidence="1">Cytoplasm</location>
    </subcellularLocation>
</comment>
<comment type="similarity">
    <text evidence="1">Belongs to the phosphopentomutase family.</text>
</comment>
<accession>B9E115</accession>
<feature type="chain" id="PRO_1000148239" description="Phosphopentomutase">
    <location>
        <begin position="1"/>
        <end position="389"/>
    </location>
</feature>
<feature type="binding site" evidence="1">
    <location>
        <position position="10"/>
    </location>
    <ligand>
        <name>Mn(2+)</name>
        <dbReference type="ChEBI" id="CHEBI:29035"/>
        <label>1</label>
    </ligand>
</feature>
<feature type="binding site" evidence="1">
    <location>
        <position position="282"/>
    </location>
    <ligand>
        <name>Mn(2+)</name>
        <dbReference type="ChEBI" id="CHEBI:29035"/>
        <label>2</label>
    </ligand>
</feature>
<feature type="binding site" evidence="1">
    <location>
        <position position="287"/>
    </location>
    <ligand>
        <name>Mn(2+)</name>
        <dbReference type="ChEBI" id="CHEBI:29035"/>
        <label>2</label>
    </ligand>
</feature>
<feature type="binding site" evidence="1">
    <location>
        <position position="323"/>
    </location>
    <ligand>
        <name>Mn(2+)</name>
        <dbReference type="ChEBI" id="CHEBI:29035"/>
        <label>1</label>
    </ligand>
</feature>
<feature type="binding site" evidence="1">
    <location>
        <position position="324"/>
    </location>
    <ligand>
        <name>Mn(2+)</name>
        <dbReference type="ChEBI" id="CHEBI:29035"/>
        <label>1</label>
    </ligand>
</feature>
<feature type="binding site" evidence="1">
    <location>
        <position position="335"/>
    </location>
    <ligand>
        <name>Mn(2+)</name>
        <dbReference type="ChEBI" id="CHEBI:29035"/>
        <label>2</label>
    </ligand>
</feature>
<reference key="1">
    <citation type="submission" date="2005-09" db="EMBL/GenBank/DDBJ databases">
        <title>Complete genome sequence of Clostridium kluyveri and comparative genomics of Clostridia species.</title>
        <authorList>
            <person name="Inui M."/>
            <person name="Nonaka H."/>
            <person name="Shinoda Y."/>
            <person name="Ikenaga Y."/>
            <person name="Abe M."/>
            <person name="Naito K."/>
            <person name="Vertes A.A."/>
            <person name="Yukawa H."/>
        </authorList>
    </citation>
    <scope>NUCLEOTIDE SEQUENCE [LARGE SCALE GENOMIC DNA]</scope>
    <source>
        <strain>NBRC 12016</strain>
    </source>
</reference>
<organism>
    <name type="scientific">Clostridium kluyveri (strain NBRC 12016)</name>
    <dbReference type="NCBI Taxonomy" id="583346"/>
    <lineage>
        <taxon>Bacteria</taxon>
        <taxon>Bacillati</taxon>
        <taxon>Bacillota</taxon>
        <taxon>Clostridia</taxon>
        <taxon>Eubacteriales</taxon>
        <taxon>Clostridiaceae</taxon>
        <taxon>Clostridium</taxon>
    </lineage>
</organism>
<keyword id="KW-0963">Cytoplasm</keyword>
<keyword id="KW-0413">Isomerase</keyword>
<keyword id="KW-0464">Manganese</keyword>
<keyword id="KW-0479">Metal-binding</keyword>
<proteinExistence type="inferred from homology"/>
<sequence>MERVILIVFDSVGIGELPDAKEYGDVGSNTLGNISKAAGGLEIPTLYKLGIGNIQGVENLRRCEKPIGSFGKCAELSKGKDTVTGHWEMAGIVLKTPLNTYPQGFPEDIIEEFQVKIGRKVLGNKVASGTEIINELGKEHVDTGYPIVYTSADSVFQVAAHEKIIPVEELYKMCKIAREMLLGDRTVGRVIARPFIYDKGKYVRTSNRKDFALDPPGKTMLDYIKEVGLDVMAVGKIEDIYNKRGITEAVHIKNNMDGIDKTLGYMKKNKSGLIFANLVDFDMLYGHRNDTEGYAKALVEADKRIPEIISNMNEEDVLIITADHGCDPTTKSTDHSREYIPVLVYGKNLKAGVDIGIRKSYSDIGKTILELLDIKNNLQGIGFKDLINK</sequence>
<dbReference type="EC" id="5.4.2.7" evidence="1"/>
<dbReference type="EMBL" id="AP009049">
    <property type="protein sequence ID" value="BAH06190.1"/>
    <property type="molecule type" value="Genomic_DNA"/>
</dbReference>
<dbReference type="RefSeq" id="WP_012101628.1">
    <property type="nucleotide sequence ID" value="NC_011837.1"/>
</dbReference>
<dbReference type="SMR" id="B9E115"/>
<dbReference type="KEGG" id="ckr:CKR_1139"/>
<dbReference type="HOGENOM" id="CLU_053861_0_0_9"/>
<dbReference type="UniPathway" id="UPA00002">
    <property type="reaction ID" value="UER00467"/>
</dbReference>
<dbReference type="Proteomes" id="UP000007969">
    <property type="component" value="Chromosome"/>
</dbReference>
<dbReference type="GO" id="GO:0005829">
    <property type="term" value="C:cytosol"/>
    <property type="evidence" value="ECO:0007669"/>
    <property type="project" value="TreeGrafter"/>
</dbReference>
<dbReference type="GO" id="GO:0000287">
    <property type="term" value="F:magnesium ion binding"/>
    <property type="evidence" value="ECO:0007669"/>
    <property type="project" value="InterPro"/>
</dbReference>
<dbReference type="GO" id="GO:0030145">
    <property type="term" value="F:manganese ion binding"/>
    <property type="evidence" value="ECO:0007669"/>
    <property type="project" value="UniProtKB-UniRule"/>
</dbReference>
<dbReference type="GO" id="GO:0008973">
    <property type="term" value="F:phosphopentomutase activity"/>
    <property type="evidence" value="ECO:0007669"/>
    <property type="project" value="UniProtKB-UniRule"/>
</dbReference>
<dbReference type="GO" id="GO:0006018">
    <property type="term" value="P:2-deoxyribose 1-phosphate catabolic process"/>
    <property type="evidence" value="ECO:0007669"/>
    <property type="project" value="UniProtKB-UniRule"/>
</dbReference>
<dbReference type="GO" id="GO:0006015">
    <property type="term" value="P:5-phosphoribose 1-diphosphate biosynthetic process"/>
    <property type="evidence" value="ECO:0007669"/>
    <property type="project" value="UniProtKB-UniPathway"/>
</dbReference>
<dbReference type="GO" id="GO:0043094">
    <property type="term" value="P:metabolic compound salvage"/>
    <property type="evidence" value="ECO:0007669"/>
    <property type="project" value="InterPro"/>
</dbReference>
<dbReference type="GO" id="GO:0009117">
    <property type="term" value="P:nucleotide metabolic process"/>
    <property type="evidence" value="ECO:0007669"/>
    <property type="project" value="InterPro"/>
</dbReference>
<dbReference type="CDD" id="cd16009">
    <property type="entry name" value="PPM"/>
    <property type="match status" value="1"/>
</dbReference>
<dbReference type="FunFam" id="3.30.70.1250:FF:000001">
    <property type="entry name" value="Phosphopentomutase"/>
    <property type="match status" value="1"/>
</dbReference>
<dbReference type="Gene3D" id="3.40.720.10">
    <property type="entry name" value="Alkaline Phosphatase, subunit A"/>
    <property type="match status" value="1"/>
</dbReference>
<dbReference type="Gene3D" id="3.30.70.1250">
    <property type="entry name" value="Phosphopentomutase"/>
    <property type="match status" value="1"/>
</dbReference>
<dbReference type="HAMAP" id="MF_00740">
    <property type="entry name" value="Phosphopentomut"/>
    <property type="match status" value="1"/>
</dbReference>
<dbReference type="InterPro" id="IPR017850">
    <property type="entry name" value="Alkaline_phosphatase_core_sf"/>
</dbReference>
<dbReference type="InterPro" id="IPR010045">
    <property type="entry name" value="DeoB"/>
</dbReference>
<dbReference type="InterPro" id="IPR006124">
    <property type="entry name" value="Metalloenzyme"/>
</dbReference>
<dbReference type="InterPro" id="IPR024052">
    <property type="entry name" value="Phosphopentomutase_DeoB_cap_sf"/>
</dbReference>
<dbReference type="NCBIfam" id="TIGR01696">
    <property type="entry name" value="deoB"/>
    <property type="match status" value="1"/>
</dbReference>
<dbReference type="NCBIfam" id="NF003766">
    <property type="entry name" value="PRK05362.1"/>
    <property type="match status" value="1"/>
</dbReference>
<dbReference type="PANTHER" id="PTHR21110">
    <property type="entry name" value="PHOSPHOPENTOMUTASE"/>
    <property type="match status" value="1"/>
</dbReference>
<dbReference type="PANTHER" id="PTHR21110:SF0">
    <property type="entry name" value="PHOSPHOPENTOMUTASE"/>
    <property type="match status" value="1"/>
</dbReference>
<dbReference type="Pfam" id="PF01676">
    <property type="entry name" value="Metalloenzyme"/>
    <property type="match status" value="1"/>
</dbReference>
<dbReference type="PIRSF" id="PIRSF001491">
    <property type="entry name" value="Ppentomutase"/>
    <property type="match status" value="1"/>
</dbReference>
<dbReference type="SUPFAM" id="SSF53649">
    <property type="entry name" value="Alkaline phosphatase-like"/>
    <property type="match status" value="1"/>
</dbReference>
<dbReference type="SUPFAM" id="SSF143856">
    <property type="entry name" value="DeoB insert domain-like"/>
    <property type="match status" value="1"/>
</dbReference>
<gene>
    <name evidence="1" type="primary">deoB</name>
    <name type="ordered locus">CKR_1139</name>
</gene>
<evidence type="ECO:0000255" key="1">
    <source>
        <dbReference type="HAMAP-Rule" id="MF_00740"/>
    </source>
</evidence>
<name>DEOB_CLOK1</name>